<reference key="1">
    <citation type="journal article" date="2002" name="Nucleic Acids Res.">
        <title>The complete genomic sequence of Mycoplasma penetrans, an intracellular bacterial pathogen in humans.</title>
        <authorList>
            <person name="Sasaki Y."/>
            <person name="Ishikawa J."/>
            <person name="Yamashita A."/>
            <person name="Oshima K."/>
            <person name="Kenri T."/>
            <person name="Furuya K."/>
            <person name="Yoshino C."/>
            <person name="Horino A."/>
            <person name="Shiba T."/>
            <person name="Sasaki T."/>
            <person name="Hattori M."/>
        </authorList>
    </citation>
    <scope>NUCLEOTIDE SEQUENCE [LARGE SCALE GENOMIC DNA]</scope>
    <source>
        <strain>HF-2</strain>
    </source>
</reference>
<comment type="catalytic activity">
    <reaction evidence="1">
        <text>tRNA(Leu) + L-leucine + ATP = L-leucyl-tRNA(Leu) + AMP + diphosphate</text>
        <dbReference type="Rhea" id="RHEA:11688"/>
        <dbReference type="Rhea" id="RHEA-COMP:9613"/>
        <dbReference type="Rhea" id="RHEA-COMP:9622"/>
        <dbReference type="ChEBI" id="CHEBI:30616"/>
        <dbReference type="ChEBI" id="CHEBI:33019"/>
        <dbReference type="ChEBI" id="CHEBI:57427"/>
        <dbReference type="ChEBI" id="CHEBI:78442"/>
        <dbReference type="ChEBI" id="CHEBI:78494"/>
        <dbReference type="ChEBI" id="CHEBI:456215"/>
        <dbReference type="EC" id="6.1.1.4"/>
    </reaction>
</comment>
<comment type="subcellular location">
    <subcellularLocation>
        <location evidence="1">Cytoplasm</location>
    </subcellularLocation>
</comment>
<comment type="similarity">
    <text evidence="1">Belongs to the class-I aminoacyl-tRNA synthetase family.</text>
</comment>
<accession>Q8EW18</accession>
<organism>
    <name type="scientific">Malacoplasma penetrans (strain HF-2)</name>
    <name type="common">Mycoplasma penetrans</name>
    <dbReference type="NCBI Taxonomy" id="272633"/>
    <lineage>
        <taxon>Bacteria</taxon>
        <taxon>Bacillati</taxon>
        <taxon>Mycoplasmatota</taxon>
        <taxon>Mycoplasmoidales</taxon>
        <taxon>Mycoplasmoidaceae</taxon>
        <taxon>Malacoplasma</taxon>
    </lineage>
</organism>
<sequence length="799" mass="93330">MYNHNLVEKKWRKIWKDSNLHTFKDNLKKPKFYALDMFPYPSGAGLHMGHVKSYTPTDVYARFKRYQGYSVLHPMGWDAFGLPAEQFALATKNHPATFTDQNINNFKLQIDQLGFWFDWNKEVNTTDPNFYKWTQWIFIKLFENGLAEIKDIDVNWCQELGTVLANEEVLTDEKGNKVSERGKYPVIKKPMKQWVLKITKFADQLIDDLELTDWTVGLKNIQKKWIGKSIGATVKFKIQNSDSEIEVFTSRPDTIFGVSFIGLSSDHELVLKEKTKNKKIEAFLNELSSLKEYERTAINVEKKGVLLDIKAIHPITKQLVPVYVCNYVLSNYGNGAIMGVPAGDKRDYDFAKLFNLEIKEIIKDHPAPYEEDGIHINSDFLNGLNNEDAIAKIVEYLEKNKIGKKQVNYKLKDWLFSRQRYWGEPFPVLFDEKGNIIVEKNLPLLLPETNDIKPSGTGESPLANLTEWVNVKIDSKLYRRETNTMPQWAGSCWYYLAYLLKDGDSYLPLDSKQAYEIFKRWLPVDIYIGGQEHAVLHLLYARFWHKFLHQINVVPNKEPFYKIINQGMILVNGEKMSKSKGNVVNPSDFVVSHGADALRLYMMFMGPITASLPWEESGIDGMYKWVQRVYRLFETKQIDKNFNDENLEKKYHQFVKKASEFMENFDFNLVISEMMIFINECYKYEKINYDYMLNFCVILSCFAPFITEEINEVFLKNKKFISDNLWPKYDEKKIVETTIKIPVQINGKIREVLEINLGATQKDVVDLAIKNEKIIKWIENKKIVKEIYIENKILNLIIK</sequence>
<proteinExistence type="inferred from homology"/>
<feature type="chain" id="PRO_0000152049" description="Leucine--tRNA ligase">
    <location>
        <begin position="1"/>
        <end position="799"/>
    </location>
</feature>
<feature type="short sequence motif" description="'HIGH' region">
    <location>
        <begin position="39"/>
        <end position="50"/>
    </location>
</feature>
<feature type="short sequence motif" description="'KMSKS' region">
    <location>
        <begin position="575"/>
        <end position="579"/>
    </location>
</feature>
<feature type="binding site" evidence="1">
    <location>
        <position position="578"/>
    </location>
    <ligand>
        <name>ATP</name>
        <dbReference type="ChEBI" id="CHEBI:30616"/>
    </ligand>
</feature>
<gene>
    <name evidence="1" type="primary">leuS</name>
    <name type="ordered locus">MYPE3890</name>
</gene>
<dbReference type="EC" id="6.1.1.4" evidence="1"/>
<dbReference type="EMBL" id="BA000026">
    <property type="protein sequence ID" value="BAC44178.1"/>
    <property type="molecule type" value="Genomic_DNA"/>
</dbReference>
<dbReference type="RefSeq" id="WP_011077214.1">
    <property type="nucleotide sequence ID" value="NC_004432.1"/>
</dbReference>
<dbReference type="SMR" id="Q8EW18"/>
<dbReference type="FunCoup" id="Q8EW18">
    <property type="interactions" value="282"/>
</dbReference>
<dbReference type="STRING" id="272633.gene:10731504"/>
<dbReference type="KEGG" id="mpe:MYPE3890"/>
<dbReference type="eggNOG" id="COG0495">
    <property type="taxonomic scope" value="Bacteria"/>
</dbReference>
<dbReference type="HOGENOM" id="CLU_004427_0_0_14"/>
<dbReference type="InParanoid" id="Q8EW18"/>
<dbReference type="Proteomes" id="UP000002522">
    <property type="component" value="Chromosome"/>
</dbReference>
<dbReference type="GO" id="GO:0005829">
    <property type="term" value="C:cytosol"/>
    <property type="evidence" value="ECO:0007669"/>
    <property type="project" value="TreeGrafter"/>
</dbReference>
<dbReference type="GO" id="GO:0002161">
    <property type="term" value="F:aminoacyl-tRNA deacylase activity"/>
    <property type="evidence" value="ECO:0007669"/>
    <property type="project" value="InterPro"/>
</dbReference>
<dbReference type="GO" id="GO:0005524">
    <property type="term" value="F:ATP binding"/>
    <property type="evidence" value="ECO:0007669"/>
    <property type="project" value="UniProtKB-UniRule"/>
</dbReference>
<dbReference type="GO" id="GO:0004823">
    <property type="term" value="F:leucine-tRNA ligase activity"/>
    <property type="evidence" value="ECO:0007669"/>
    <property type="project" value="UniProtKB-UniRule"/>
</dbReference>
<dbReference type="GO" id="GO:0006429">
    <property type="term" value="P:leucyl-tRNA aminoacylation"/>
    <property type="evidence" value="ECO:0007669"/>
    <property type="project" value="UniProtKB-UniRule"/>
</dbReference>
<dbReference type="CDD" id="cd07958">
    <property type="entry name" value="Anticodon_Ia_Leu_BEm"/>
    <property type="match status" value="1"/>
</dbReference>
<dbReference type="CDD" id="cd00812">
    <property type="entry name" value="LeuRS_core"/>
    <property type="match status" value="1"/>
</dbReference>
<dbReference type="FunFam" id="1.10.730.10:FF:000002">
    <property type="entry name" value="Leucine--tRNA ligase"/>
    <property type="match status" value="1"/>
</dbReference>
<dbReference type="FunFam" id="3.40.50.620:FF:000056">
    <property type="entry name" value="Leucine--tRNA ligase"/>
    <property type="match status" value="1"/>
</dbReference>
<dbReference type="FunFam" id="3.40.50.620:FF:000077">
    <property type="entry name" value="Leucine--tRNA ligase"/>
    <property type="match status" value="1"/>
</dbReference>
<dbReference type="Gene3D" id="3.10.20.590">
    <property type="match status" value="1"/>
</dbReference>
<dbReference type="Gene3D" id="3.40.50.620">
    <property type="entry name" value="HUPs"/>
    <property type="match status" value="2"/>
</dbReference>
<dbReference type="Gene3D" id="1.10.730.10">
    <property type="entry name" value="Isoleucyl-tRNA Synthetase, Domain 1"/>
    <property type="match status" value="1"/>
</dbReference>
<dbReference type="HAMAP" id="MF_00049_B">
    <property type="entry name" value="Leu_tRNA_synth_B"/>
    <property type="match status" value="1"/>
</dbReference>
<dbReference type="InterPro" id="IPR001412">
    <property type="entry name" value="aa-tRNA-synth_I_CS"/>
</dbReference>
<dbReference type="InterPro" id="IPR002300">
    <property type="entry name" value="aa-tRNA-synth_Ia"/>
</dbReference>
<dbReference type="InterPro" id="IPR002302">
    <property type="entry name" value="Leu-tRNA-ligase"/>
</dbReference>
<dbReference type="InterPro" id="IPR025709">
    <property type="entry name" value="Leu_tRNA-synth_edit"/>
</dbReference>
<dbReference type="InterPro" id="IPR013155">
    <property type="entry name" value="M/V/L/I-tRNA-synth_anticd-bd"/>
</dbReference>
<dbReference type="InterPro" id="IPR014729">
    <property type="entry name" value="Rossmann-like_a/b/a_fold"/>
</dbReference>
<dbReference type="InterPro" id="IPR009080">
    <property type="entry name" value="tRNAsynth_Ia_anticodon-bd"/>
</dbReference>
<dbReference type="InterPro" id="IPR009008">
    <property type="entry name" value="Val/Leu/Ile-tRNA-synth_edit"/>
</dbReference>
<dbReference type="NCBIfam" id="TIGR00396">
    <property type="entry name" value="leuS_bact"/>
    <property type="match status" value="1"/>
</dbReference>
<dbReference type="PANTHER" id="PTHR43740:SF2">
    <property type="entry name" value="LEUCINE--TRNA LIGASE, MITOCHONDRIAL"/>
    <property type="match status" value="1"/>
</dbReference>
<dbReference type="PANTHER" id="PTHR43740">
    <property type="entry name" value="LEUCYL-TRNA SYNTHETASE"/>
    <property type="match status" value="1"/>
</dbReference>
<dbReference type="Pfam" id="PF08264">
    <property type="entry name" value="Anticodon_1"/>
    <property type="match status" value="1"/>
</dbReference>
<dbReference type="Pfam" id="PF00133">
    <property type="entry name" value="tRNA-synt_1"/>
    <property type="match status" value="2"/>
</dbReference>
<dbReference type="Pfam" id="PF13603">
    <property type="entry name" value="tRNA-synt_1_2"/>
    <property type="match status" value="1"/>
</dbReference>
<dbReference type="PRINTS" id="PR00985">
    <property type="entry name" value="TRNASYNTHLEU"/>
</dbReference>
<dbReference type="SUPFAM" id="SSF47323">
    <property type="entry name" value="Anticodon-binding domain of a subclass of class I aminoacyl-tRNA synthetases"/>
    <property type="match status" value="1"/>
</dbReference>
<dbReference type="SUPFAM" id="SSF52374">
    <property type="entry name" value="Nucleotidylyl transferase"/>
    <property type="match status" value="1"/>
</dbReference>
<dbReference type="SUPFAM" id="SSF50677">
    <property type="entry name" value="ValRS/IleRS/LeuRS editing domain"/>
    <property type="match status" value="1"/>
</dbReference>
<dbReference type="PROSITE" id="PS00178">
    <property type="entry name" value="AA_TRNA_LIGASE_I"/>
    <property type="match status" value="1"/>
</dbReference>
<name>SYL_MALP2</name>
<keyword id="KW-0030">Aminoacyl-tRNA synthetase</keyword>
<keyword id="KW-0067">ATP-binding</keyword>
<keyword id="KW-0963">Cytoplasm</keyword>
<keyword id="KW-0436">Ligase</keyword>
<keyword id="KW-0547">Nucleotide-binding</keyword>
<keyword id="KW-0648">Protein biosynthesis</keyword>
<keyword id="KW-1185">Reference proteome</keyword>
<protein>
    <recommendedName>
        <fullName evidence="1">Leucine--tRNA ligase</fullName>
        <ecNumber evidence="1">6.1.1.4</ecNumber>
    </recommendedName>
    <alternativeName>
        <fullName evidence="1">Leucyl-tRNA synthetase</fullName>
        <shortName evidence="1">LeuRS</shortName>
    </alternativeName>
</protein>
<evidence type="ECO:0000255" key="1">
    <source>
        <dbReference type="HAMAP-Rule" id="MF_00049"/>
    </source>
</evidence>